<evidence type="ECO:0000255" key="1">
    <source>
        <dbReference type="HAMAP-Rule" id="MF_00147"/>
    </source>
</evidence>
<reference key="1">
    <citation type="journal article" date="2001" name="Nucleic Acids Res.">
        <title>The complete genome sequence of the murine respiratory pathogen Mycoplasma pulmonis.</title>
        <authorList>
            <person name="Chambaud I."/>
            <person name="Heilig R."/>
            <person name="Ferris S."/>
            <person name="Barbe V."/>
            <person name="Samson D."/>
            <person name="Galisson F."/>
            <person name="Moszer I."/>
            <person name="Dybvig K."/>
            <person name="Wroblewski H."/>
            <person name="Viari A."/>
            <person name="Rocha E.P.C."/>
            <person name="Blanchard A."/>
        </authorList>
    </citation>
    <scope>NUCLEOTIDE SEQUENCE [LARGE SCALE GENOMIC DNA]</scope>
    <source>
        <strain>UAB CTIP</strain>
    </source>
</reference>
<proteinExistence type="inferred from homology"/>
<gene>
    <name evidence="1" type="primary">tpiA</name>
    <name type="ordered locus">MYPU_4580</name>
</gene>
<comment type="function">
    <text evidence="1">Involved in the gluconeogenesis. Catalyzes stereospecifically the conversion of dihydroxyacetone phosphate (DHAP) to D-glyceraldehyde-3-phosphate (G3P).</text>
</comment>
<comment type="catalytic activity">
    <reaction evidence="1">
        <text>D-glyceraldehyde 3-phosphate = dihydroxyacetone phosphate</text>
        <dbReference type="Rhea" id="RHEA:18585"/>
        <dbReference type="ChEBI" id="CHEBI:57642"/>
        <dbReference type="ChEBI" id="CHEBI:59776"/>
        <dbReference type="EC" id="5.3.1.1"/>
    </reaction>
</comment>
<comment type="pathway">
    <text evidence="1">Carbohydrate biosynthesis; gluconeogenesis.</text>
</comment>
<comment type="pathway">
    <text evidence="1">Carbohydrate degradation; glycolysis; D-glyceraldehyde 3-phosphate from glycerone phosphate: step 1/1.</text>
</comment>
<comment type="subunit">
    <text evidence="1">Homodimer.</text>
</comment>
<comment type="subcellular location">
    <subcellularLocation>
        <location evidence="1">Cytoplasm</location>
    </subcellularLocation>
</comment>
<comment type="similarity">
    <text evidence="1">Belongs to the triosephosphate isomerase family.</text>
</comment>
<organism>
    <name type="scientific">Mycoplasmopsis pulmonis (strain UAB CTIP)</name>
    <name type="common">Mycoplasma pulmonis</name>
    <dbReference type="NCBI Taxonomy" id="272635"/>
    <lineage>
        <taxon>Bacteria</taxon>
        <taxon>Bacillati</taxon>
        <taxon>Mycoplasmatota</taxon>
        <taxon>Mycoplasmoidales</taxon>
        <taxon>Metamycoplasmataceae</taxon>
        <taxon>Mycoplasmopsis</taxon>
    </lineage>
</organism>
<keyword id="KW-0963">Cytoplasm</keyword>
<keyword id="KW-0312">Gluconeogenesis</keyword>
<keyword id="KW-0324">Glycolysis</keyword>
<keyword id="KW-0413">Isomerase</keyword>
<keyword id="KW-1185">Reference proteome</keyword>
<name>TPIS_MYCPU</name>
<accession>Q98QA8</accession>
<dbReference type="EC" id="5.3.1.1" evidence="1"/>
<dbReference type="EMBL" id="AL445564">
    <property type="protein sequence ID" value="CAC13631.1"/>
    <property type="molecule type" value="Genomic_DNA"/>
</dbReference>
<dbReference type="PIR" id="B99569">
    <property type="entry name" value="B99569"/>
</dbReference>
<dbReference type="RefSeq" id="WP_010925259.1">
    <property type="nucleotide sequence ID" value="NC_002771.1"/>
</dbReference>
<dbReference type="SMR" id="Q98QA8"/>
<dbReference type="STRING" id="272635.gene:17577059"/>
<dbReference type="KEGG" id="mpu:MYPU_4580"/>
<dbReference type="eggNOG" id="COG0149">
    <property type="taxonomic scope" value="Bacteria"/>
</dbReference>
<dbReference type="HOGENOM" id="CLU_024251_2_3_14"/>
<dbReference type="BioCyc" id="MPUL272635:G1GT6-462-MONOMER"/>
<dbReference type="UniPathway" id="UPA00109">
    <property type="reaction ID" value="UER00189"/>
</dbReference>
<dbReference type="UniPathway" id="UPA00138"/>
<dbReference type="Proteomes" id="UP000000528">
    <property type="component" value="Chromosome"/>
</dbReference>
<dbReference type="GO" id="GO:0005829">
    <property type="term" value="C:cytosol"/>
    <property type="evidence" value="ECO:0007669"/>
    <property type="project" value="TreeGrafter"/>
</dbReference>
<dbReference type="GO" id="GO:0004807">
    <property type="term" value="F:triose-phosphate isomerase activity"/>
    <property type="evidence" value="ECO:0007669"/>
    <property type="project" value="UniProtKB-UniRule"/>
</dbReference>
<dbReference type="GO" id="GO:0006094">
    <property type="term" value="P:gluconeogenesis"/>
    <property type="evidence" value="ECO:0007669"/>
    <property type="project" value="UniProtKB-UniRule"/>
</dbReference>
<dbReference type="GO" id="GO:0046166">
    <property type="term" value="P:glyceraldehyde-3-phosphate biosynthetic process"/>
    <property type="evidence" value="ECO:0007669"/>
    <property type="project" value="TreeGrafter"/>
</dbReference>
<dbReference type="GO" id="GO:0019563">
    <property type="term" value="P:glycerol catabolic process"/>
    <property type="evidence" value="ECO:0007669"/>
    <property type="project" value="TreeGrafter"/>
</dbReference>
<dbReference type="GO" id="GO:0006096">
    <property type="term" value="P:glycolytic process"/>
    <property type="evidence" value="ECO:0007669"/>
    <property type="project" value="UniProtKB-UniRule"/>
</dbReference>
<dbReference type="CDD" id="cd00311">
    <property type="entry name" value="TIM"/>
    <property type="match status" value="1"/>
</dbReference>
<dbReference type="FunFam" id="3.20.20.70:FF:000016">
    <property type="entry name" value="Triosephosphate isomerase"/>
    <property type="match status" value="1"/>
</dbReference>
<dbReference type="Gene3D" id="3.20.20.70">
    <property type="entry name" value="Aldolase class I"/>
    <property type="match status" value="1"/>
</dbReference>
<dbReference type="HAMAP" id="MF_00147_B">
    <property type="entry name" value="TIM_B"/>
    <property type="match status" value="1"/>
</dbReference>
<dbReference type="InterPro" id="IPR013785">
    <property type="entry name" value="Aldolase_TIM"/>
</dbReference>
<dbReference type="InterPro" id="IPR035990">
    <property type="entry name" value="TIM_sf"/>
</dbReference>
<dbReference type="InterPro" id="IPR022896">
    <property type="entry name" value="TrioseP_Isoase_bac/euk"/>
</dbReference>
<dbReference type="InterPro" id="IPR000652">
    <property type="entry name" value="Triosephosphate_isomerase"/>
</dbReference>
<dbReference type="InterPro" id="IPR020861">
    <property type="entry name" value="Triosephosphate_isomerase_AS"/>
</dbReference>
<dbReference type="NCBIfam" id="TIGR00419">
    <property type="entry name" value="tim"/>
    <property type="match status" value="1"/>
</dbReference>
<dbReference type="PANTHER" id="PTHR21139">
    <property type="entry name" value="TRIOSEPHOSPHATE ISOMERASE"/>
    <property type="match status" value="1"/>
</dbReference>
<dbReference type="PANTHER" id="PTHR21139:SF42">
    <property type="entry name" value="TRIOSEPHOSPHATE ISOMERASE"/>
    <property type="match status" value="1"/>
</dbReference>
<dbReference type="Pfam" id="PF00121">
    <property type="entry name" value="TIM"/>
    <property type="match status" value="1"/>
</dbReference>
<dbReference type="SUPFAM" id="SSF51351">
    <property type="entry name" value="Triosephosphate isomerase (TIM)"/>
    <property type="match status" value="1"/>
</dbReference>
<dbReference type="PROSITE" id="PS00171">
    <property type="entry name" value="TIM_1"/>
    <property type="match status" value="1"/>
</dbReference>
<dbReference type="PROSITE" id="PS51440">
    <property type="entry name" value="TIM_2"/>
    <property type="match status" value="1"/>
</dbReference>
<feature type="chain" id="PRO_0000090255" description="Triosephosphate isomerase">
    <location>
        <begin position="1"/>
        <end position="248"/>
    </location>
</feature>
<feature type="active site" description="Electrophile" evidence="1">
    <location>
        <position position="101"/>
    </location>
</feature>
<feature type="active site" description="Proton acceptor" evidence="1">
    <location>
        <position position="170"/>
    </location>
</feature>
<feature type="binding site" evidence="1">
    <location>
        <begin position="9"/>
        <end position="11"/>
    </location>
    <ligand>
        <name>substrate</name>
    </ligand>
</feature>
<feature type="binding site" evidence="1">
    <location>
        <position position="176"/>
    </location>
    <ligand>
        <name>substrate</name>
    </ligand>
</feature>
<feature type="binding site" evidence="1">
    <location>
        <position position="208"/>
    </location>
    <ligand>
        <name>substrate</name>
    </ligand>
</feature>
<feature type="binding site" evidence="1">
    <location>
        <begin position="229"/>
        <end position="230"/>
    </location>
    <ligand>
        <name>substrate</name>
    </ligand>
</feature>
<sequence length="248" mass="27406">MKKLLIIGNWKMNKTYDEARDFINAFSNAYALNGAKISENIEYGIAPSFTNMSLFNKELLEKTNINLVAQNINENRSGAFTGEISAQMLKSINAKYVIVGHSERRQNYRETNKIVNQKAKAAIENGLIPIICVGESLEEYEAGKTKAVIKKQIKQSLEALDLSKIVVAYEPIWAIGTGKVATAEVAQQICKFIRSITSKDLIIQYGGSVSPSNIENLMKQEDIDGALVGGASLEVDSFFELITFNALK</sequence>
<protein>
    <recommendedName>
        <fullName evidence="1">Triosephosphate isomerase</fullName>
        <shortName evidence="1">TIM</shortName>
        <shortName evidence="1">TPI</shortName>
        <ecNumber evidence="1">5.3.1.1</ecNumber>
    </recommendedName>
    <alternativeName>
        <fullName evidence="1">Triose-phosphate isomerase</fullName>
    </alternativeName>
</protein>